<protein>
    <recommendedName>
        <fullName evidence="2">Protein archease</fullName>
    </recommendedName>
</protein>
<accession>C5A6Z1</accession>
<evidence type="ECO:0000250" key="1"/>
<evidence type="ECO:0000255" key="2">
    <source>
        <dbReference type="HAMAP-Rule" id="MF_01222"/>
    </source>
</evidence>
<dbReference type="EMBL" id="CP001398">
    <property type="protein sequence ID" value="ACS34003.1"/>
    <property type="molecule type" value="Genomic_DNA"/>
</dbReference>
<dbReference type="RefSeq" id="WP_015859114.1">
    <property type="nucleotide sequence ID" value="NC_012804.1"/>
</dbReference>
<dbReference type="SMR" id="C5A6Z1"/>
<dbReference type="STRING" id="593117.TGAM_1501"/>
<dbReference type="PaxDb" id="593117-TGAM_1501"/>
<dbReference type="GeneID" id="7987303"/>
<dbReference type="KEGG" id="tga:TGAM_1501"/>
<dbReference type="PATRIC" id="fig|593117.10.peg.1503"/>
<dbReference type="eggNOG" id="arCOG04055">
    <property type="taxonomic scope" value="Archaea"/>
</dbReference>
<dbReference type="HOGENOM" id="CLU_111362_3_0_2"/>
<dbReference type="OrthoDB" id="8831at2157"/>
<dbReference type="Proteomes" id="UP000001488">
    <property type="component" value="Chromosome"/>
</dbReference>
<dbReference type="GO" id="GO:0005509">
    <property type="term" value="F:calcium ion binding"/>
    <property type="evidence" value="ECO:0007669"/>
    <property type="project" value="UniProtKB-UniRule"/>
</dbReference>
<dbReference type="GO" id="GO:0006388">
    <property type="term" value="P:tRNA splicing, via endonucleolytic cleavage and ligation"/>
    <property type="evidence" value="ECO:0007669"/>
    <property type="project" value="UniProtKB-UniRule"/>
</dbReference>
<dbReference type="FunFam" id="3.55.10.10:FF:000002">
    <property type="entry name" value="Archease, putative"/>
    <property type="match status" value="1"/>
</dbReference>
<dbReference type="Gene3D" id="3.55.10.10">
    <property type="entry name" value="Archease domain"/>
    <property type="match status" value="1"/>
</dbReference>
<dbReference type="HAMAP" id="MF_01222">
    <property type="entry name" value="Archease_arch"/>
    <property type="match status" value="1"/>
</dbReference>
<dbReference type="InterPro" id="IPR002804">
    <property type="entry name" value="Archease"/>
</dbReference>
<dbReference type="InterPro" id="IPR022952">
    <property type="entry name" value="Archease_arc"/>
</dbReference>
<dbReference type="InterPro" id="IPR023572">
    <property type="entry name" value="Archease_dom"/>
</dbReference>
<dbReference type="InterPro" id="IPR036820">
    <property type="entry name" value="Archease_dom_sf"/>
</dbReference>
<dbReference type="NCBIfam" id="NF001617">
    <property type="entry name" value="PRK00407.1"/>
    <property type="match status" value="1"/>
</dbReference>
<dbReference type="PANTHER" id="PTHR12682">
    <property type="entry name" value="ARCHEASE"/>
    <property type="match status" value="1"/>
</dbReference>
<dbReference type="PANTHER" id="PTHR12682:SF11">
    <property type="entry name" value="PROTEIN ARCHEASE"/>
    <property type="match status" value="1"/>
</dbReference>
<dbReference type="Pfam" id="PF01951">
    <property type="entry name" value="Archease"/>
    <property type="match status" value="1"/>
</dbReference>
<dbReference type="SUPFAM" id="SSF69819">
    <property type="entry name" value="MTH1598-like"/>
    <property type="match status" value="1"/>
</dbReference>
<name>ARCH_THEGJ</name>
<comment type="function">
    <text evidence="1">Activates the tRNA-splicing ligase complex by facilitating the enzymatic turnover of catalytic subunit RtcB. Acts by promoting the guanylylation of RtcB, a key intermediate step in tRNA ligation. Can also alter the NTP specificity of RtcB such that ATP, dGTP or ITP is used efficiently (By similarity).</text>
</comment>
<comment type="similarity">
    <text evidence="2">Belongs to the archease family.</text>
</comment>
<sequence>MRRWEHYEHTADIGVRGYGSTLEEAFEAVALGLFDVMVDVRKVEPRECREVEVEEEDLEALLYSFLEELLVLHDMEGLVFGDVRVRIEKTENGYRLKAKACGEVLDYEKHEPKEEVKAITYHDMRIEKLPDGRWMAQFVPDL</sequence>
<keyword id="KW-0106">Calcium</keyword>
<keyword id="KW-0479">Metal-binding</keyword>
<keyword id="KW-1185">Reference proteome</keyword>
<keyword id="KW-0819">tRNA processing</keyword>
<proteinExistence type="inferred from homology"/>
<feature type="chain" id="PRO_1000213977" description="Protein archease">
    <location>
        <begin position="1"/>
        <end position="142"/>
    </location>
</feature>
<feature type="binding site" evidence="1">
    <location>
        <position position="12"/>
    </location>
    <ligand>
        <name>Ca(2+)</name>
        <dbReference type="ChEBI" id="CHEBI:29108"/>
    </ligand>
</feature>
<feature type="binding site" evidence="1">
    <location>
        <position position="141"/>
    </location>
    <ligand>
        <name>Ca(2+)</name>
        <dbReference type="ChEBI" id="CHEBI:29108"/>
    </ligand>
</feature>
<feature type="binding site" evidence="1">
    <location>
        <position position="142"/>
    </location>
    <ligand>
        <name>Ca(2+)</name>
        <dbReference type="ChEBI" id="CHEBI:29108"/>
    </ligand>
</feature>
<organism>
    <name type="scientific">Thermococcus gammatolerans (strain DSM 15229 / JCM 11827 / EJ3)</name>
    <dbReference type="NCBI Taxonomy" id="593117"/>
    <lineage>
        <taxon>Archaea</taxon>
        <taxon>Methanobacteriati</taxon>
        <taxon>Methanobacteriota</taxon>
        <taxon>Thermococci</taxon>
        <taxon>Thermococcales</taxon>
        <taxon>Thermococcaceae</taxon>
        <taxon>Thermococcus</taxon>
    </lineage>
</organism>
<reference key="1">
    <citation type="journal article" date="2007" name="Genome Biol.">
        <title>Genome analysis and genome-wide proteomics of Thermococcus gammatolerans, the most radioresistant organism known amongst the Archaea.</title>
        <authorList>
            <person name="Zivanovic Y."/>
            <person name="Armengaud J."/>
            <person name="Lagorce A."/>
            <person name="Leplat C."/>
            <person name="Guerin P."/>
            <person name="Dutertre M."/>
            <person name="Anthouard V."/>
            <person name="Forterre P."/>
            <person name="Wincker P."/>
            <person name="Confalonieri F."/>
        </authorList>
    </citation>
    <scope>NUCLEOTIDE SEQUENCE [LARGE SCALE GENOMIC DNA]</scope>
    <source>
        <strain>DSM 15229 / JCM 11827 / EJ3</strain>
    </source>
</reference>
<gene>
    <name type="ordered locus">TGAM_1501</name>
</gene>